<keyword id="KW-0328">Glycosyltransferase</keyword>
<keyword id="KW-1185">Reference proteome</keyword>
<keyword id="KW-0808">Transferase</keyword>
<organism>
    <name type="scientific">Albidiferax ferrireducens (strain ATCC BAA-621 / DSM 15236 / T118)</name>
    <name type="common">Rhodoferax ferrireducens</name>
    <dbReference type="NCBI Taxonomy" id="338969"/>
    <lineage>
        <taxon>Bacteria</taxon>
        <taxon>Pseudomonadati</taxon>
        <taxon>Pseudomonadota</taxon>
        <taxon>Betaproteobacteria</taxon>
        <taxon>Burkholderiales</taxon>
        <taxon>Comamonadaceae</taxon>
        <taxon>Rhodoferax</taxon>
    </lineage>
</organism>
<protein>
    <recommendedName>
        <fullName evidence="1">Putative thymidine phosphorylase</fullName>
        <ecNumber evidence="1">2.4.2.4</ecNumber>
    </recommendedName>
    <alternativeName>
        <fullName evidence="1">TdRPase</fullName>
    </alternativeName>
</protein>
<sequence length="522" mass="56346">MRKHTDKPQLASKLVLRRVAIDTYRENVAYLHRDCAVYRAEGFQALSKVEVRANGRHILATLNVVDDPNIVACNELGLSEDAFAQMAVIDGQPASVSQAEPPQSIGALRRKLAGERLGREDFLGIVRDIAELHYSKIELSAFVVATNRDELDREEVYFLTEAMVASGRTLNWHEPLVVDKHCIGGIPGNRSSMLVVPIVAAHGLLCPKTSSRAITSPAGTADTMEVLAKVELPVDQLADIVRTHRGCLAWGGAAHLSPADDVLISVERPLAIDSPGQMVASILSKKIAAGSTHLVLDIPIGPSAKVRSMPEAQRLRRLFEYVAGRMHLSLDVVVTDGRQPIGNGIGPVLEARDVMRVLENDPRAPNDLRQKSLRLAGRLIEFDPDVRGGDGFAIARDILDSGRALAKMNAIIAAQGAKPFDHNHPQLGALTFDICASESGVVTGIDNLQVARIARLAGAPKVIGAGIDLFHKLGEAVTSGEVLYRVHAGFQSDLDFARQACAKSTGYTLGRAEDVPHVFTEF</sequence>
<comment type="catalytic activity">
    <reaction evidence="1">
        <text>thymidine + phosphate = 2-deoxy-alpha-D-ribose 1-phosphate + thymine</text>
        <dbReference type="Rhea" id="RHEA:16037"/>
        <dbReference type="ChEBI" id="CHEBI:17748"/>
        <dbReference type="ChEBI" id="CHEBI:17821"/>
        <dbReference type="ChEBI" id="CHEBI:43474"/>
        <dbReference type="ChEBI" id="CHEBI:57259"/>
        <dbReference type="EC" id="2.4.2.4"/>
    </reaction>
</comment>
<comment type="similarity">
    <text evidence="1">Belongs to the thymidine/pyrimidine-nucleoside phosphorylase family. Type 2 subfamily.</text>
</comment>
<reference key="1">
    <citation type="submission" date="2006-02" db="EMBL/GenBank/DDBJ databases">
        <title>Complete sequence of chromosome of Rhodoferax ferrireducens DSM 15236.</title>
        <authorList>
            <person name="Copeland A."/>
            <person name="Lucas S."/>
            <person name="Lapidus A."/>
            <person name="Barry K."/>
            <person name="Detter J.C."/>
            <person name="Glavina del Rio T."/>
            <person name="Hammon N."/>
            <person name="Israni S."/>
            <person name="Pitluck S."/>
            <person name="Brettin T."/>
            <person name="Bruce D."/>
            <person name="Han C."/>
            <person name="Tapia R."/>
            <person name="Gilna P."/>
            <person name="Kiss H."/>
            <person name="Schmutz J."/>
            <person name="Larimer F."/>
            <person name="Land M."/>
            <person name="Kyrpides N."/>
            <person name="Ivanova N."/>
            <person name="Richardson P."/>
        </authorList>
    </citation>
    <scope>NUCLEOTIDE SEQUENCE [LARGE SCALE GENOMIC DNA]</scope>
    <source>
        <strain>ATCC BAA-621 / DSM 15236 / T118</strain>
    </source>
</reference>
<proteinExistence type="inferred from homology"/>
<dbReference type="EC" id="2.4.2.4" evidence="1"/>
<dbReference type="EMBL" id="CP000267">
    <property type="protein sequence ID" value="ABD69963.1"/>
    <property type="molecule type" value="Genomic_DNA"/>
</dbReference>
<dbReference type="RefSeq" id="WP_011464531.1">
    <property type="nucleotide sequence ID" value="NC_007908.1"/>
</dbReference>
<dbReference type="SMR" id="Q21W90"/>
<dbReference type="STRING" id="338969.Rfer_2241"/>
<dbReference type="KEGG" id="rfr:Rfer_2241"/>
<dbReference type="eggNOG" id="COG0213">
    <property type="taxonomic scope" value="Bacteria"/>
</dbReference>
<dbReference type="HOGENOM" id="CLU_025040_6_0_4"/>
<dbReference type="OrthoDB" id="341217at2"/>
<dbReference type="Proteomes" id="UP000008332">
    <property type="component" value="Chromosome"/>
</dbReference>
<dbReference type="GO" id="GO:0005829">
    <property type="term" value="C:cytosol"/>
    <property type="evidence" value="ECO:0007669"/>
    <property type="project" value="TreeGrafter"/>
</dbReference>
<dbReference type="GO" id="GO:0004645">
    <property type="term" value="F:1,4-alpha-oligoglucan phosphorylase activity"/>
    <property type="evidence" value="ECO:0007669"/>
    <property type="project" value="InterPro"/>
</dbReference>
<dbReference type="GO" id="GO:0009032">
    <property type="term" value="F:thymidine phosphorylase activity"/>
    <property type="evidence" value="ECO:0007669"/>
    <property type="project" value="UniProtKB-UniRule"/>
</dbReference>
<dbReference type="GO" id="GO:0006206">
    <property type="term" value="P:pyrimidine nucleobase metabolic process"/>
    <property type="evidence" value="ECO:0007669"/>
    <property type="project" value="InterPro"/>
</dbReference>
<dbReference type="GO" id="GO:0006213">
    <property type="term" value="P:pyrimidine nucleoside metabolic process"/>
    <property type="evidence" value="ECO:0007669"/>
    <property type="project" value="InterPro"/>
</dbReference>
<dbReference type="Gene3D" id="1.20.970.50">
    <property type="match status" value="1"/>
</dbReference>
<dbReference type="Gene3D" id="3.40.1030.10">
    <property type="entry name" value="Nucleoside phosphorylase/phosphoribosyltransferase catalytic domain"/>
    <property type="match status" value="1"/>
</dbReference>
<dbReference type="Gene3D" id="3.90.1170.30">
    <property type="entry name" value="Pyrimidine nucleoside phosphorylase-like, C-terminal domain"/>
    <property type="match status" value="1"/>
</dbReference>
<dbReference type="HAMAP" id="MF_00703">
    <property type="entry name" value="Thymid_phosp_2"/>
    <property type="match status" value="1"/>
</dbReference>
<dbReference type="InterPro" id="IPR000312">
    <property type="entry name" value="Glycosyl_Trfase_fam3"/>
</dbReference>
<dbReference type="InterPro" id="IPR017459">
    <property type="entry name" value="Glycosyl_Trfase_fam3_N_dom"/>
</dbReference>
<dbReference type="InterPro" id="IPR036320">
    <property type="entry name" value="Glycosyl_Trfase_fam3_N_dom_sf"/>
</dbReference>
<dbReference type="InterPro" id="IPR035902">
    <property type="entry name" value="Nuc_phospho_transferase"/>
</dbReference>
<dbReference type="InterPro" id="IPR036566">
    <property type="entry name" value="PYNP-like_C_sf"/>
</dbReference>
<dbReference type="InterPro" id="IPR013102">
    <property type="entry name" value="PYNP_C"/>
</dbReference>
<dbReference type="InterPro" id="IPR017872">
    <property type="entry name" value="Pyrmidine_PPase_CS"/>
</dbReference>
<dbReference type="InterPro" id="IPR028579">
    <property type="entry name" value="Thym_Pase_Put"/>
</dbReference>
<dbReference type="InterPro" id="IPR013466">
    <property type="entry name" value="Thymidine/AMP_Pase"/>
</dbReference>
<dbReference type="InterPro" id="IPR000053">
    <property type="entry name" value="Thymidine/pyrmidine_PPase"/>
</dbReference>
<dbReference type="NCBIfam" id="TIGR02645">
    <property type="entry name" value="ARCH_P_rylase"/>
    <property type="match status" value="1"/>
</dbReference>
<dbReference type="NCBIfam" id="NF003338">
    <property type="entry name" value="PRK04350.1"/>
    <property type="match status" value="1"/>
</dbReference>
<dbReference type="PANTHER" id="PTHR10515">
    <property type="entry name" value="THYMIDINE PHOSPHORYLASE"/>
    <property type="match status" value="1"/>
</dbReference>
<dbReference type="PANTHER" id="PTHR10515:SF0">
    <property type="entry name" value="THYMIDINE PHOSPHORYLASE"/>
    <property type="match status" value="1"/>
</dbReference>
<dbReference type="Pfam" id="PF02885">
    <property type="entry name" value="Glycos_trans_3N"/>
    <property type="match status" value="1"/>
</dbReference>
<dbReference type="Pfam" id="PF00591">
    <property type="entry name" value="Glycos_transf_3"/>
    <property type="match status" value="1"/>
</dbReference>
<dbReference type="Pfam" id="PF07831">
    <property type="entry name" value="PYNP_C"/>
    <property type="match status" value="1"/>
</dbReference>
<dbReference type="SMART" id="SM00941">
    <property type="entry name" value="PYNP_C"/>
    <property type="match status" value="1"/>
</dbReference>
<dbReference type="SUPFAM" id="SSF52418">
    <property type="entry name" value="Nucleoside phosphorylase/phosphoribosyltransferase catalytic domain"/>
    <property type="match status" value="1"/>
</dbReference>
<dbReference type="SUPFAM" id="SSF47648">
    <property type="entry name" value="Nucleoside phosphorylase/phosphoribosyltransferase N-terminal domain"/>
    <property type="match status" value="1"/>
</dbReference>
<dbReference type="SUPFAM" id="SSF54680">
    <property type="entry name" value="Pyrimidine nucleoside phosphorylase C-terminal domain"/>
    <property type="match status" value="1"/>
</dbReference>
<dbReference type="PROSITE" id="PS00647">
    <property type="entry name" value="THYMID_PHOSPHORYLASE"/>
    <property type="match status" value="1"/>
</dbReference>
<evidence type="ECO:0000255" key="1">
    <source>
        <dbReference type="HAMAP-Rule" id="MF_00703"/>
    </source>
</evidence>
<accession>Q21W90</accession>
<name>TYPH_ALBFT</name>
<feature type="chain" id="PRO_0000314712" description="Putative thymidine phosphorylase">
    <location>
        <begin position="1"/>
        <end position="522"/>
    </location>
</feature>
<gene>
    <name type="ordered locus">Rfer_2241</name>
</gene>